<evidence type="ECO:0000250" key="1"/>
<evidence type="ECO:0000250" key="2">
    <source>
        <dbReference type="UniProtKB" id="Q9I7K5"/>
    </source>
</evidence>
<evidence type="ECO:0000255" key="3"/>
<evidence type="ECO:0000255" key="4">
    <source>
        <dbReference type="PROSITE-ProRule" id="PRU00096"/>
    </source>
</evidence>
<evidence type="ECO:0000312" key="5">
    <source>
        <dbReference type="EMBL" id="EDV43642.1"/>
    </source>
</evidence>
<proteinExistence type="inferred from homology"/>
<sequence length="206" mass="23757">MARTLLILCTLMAWAWTGEAVMFKLTPNTQKCLKEDIQANQLVIGEYEVSDVPGQVIDYIARDTKGHILSQQEHITKGKFSFMSEVYDAYEICFISKVPPHQRGIPQEVSLSTKKGVETKSYEGIGEASKLKPLEVDLKRLEDLSDSIVRDFVLMRKREEEMRDTNEKTNSRVLFFSIFSMCCLLGLATWQVLYLRRYFKAKKLIE</sequence>
<protein>
    <recommendedName>
        <fullName evidence="2">Transmembrane emp24 domain-containing protein bai</fullName>
    </recommendedName>
</protein>
<name>TMEDA_DROAN</name>
<reference evidence="5" key="1">
    <citation type="journal article" date="2007" name="Nature">
        <title>Evolution of genes and genomes on the Drosophila phylogeny.</title>
        <authorList>
            <consortium name="Drosophila 12 genomes consortium"/>
        </authorList>
    </citation>
    <scope>NUCLEOTIDE SEQUENCE [LARGE SCALE GENOMIC DNA]</scope>
    <source>
        <strain evidence="5">Tucson 14024-0371.13</strain>
    </source>
</reference>
<keyword id="KW-0217">Developmental protein</keyword>
<keyword id="KW-0472">Membrane</keyword>
<keyword id="KW-1185">Reference proteome</keyword>
<keyword id="KW-0732">Signal</keyword>
<keyword id="KW-0812">Transmembrane</keyword>
<keyword id="KW-1133">Transmembrane helix</keyword>
<accession>B3LVB0</accession>
<feature type="signal peptide" evidence="3">
    <location>
        <begin position="1"/>
        <end position="20"/>
    </location>
</feature>
<feature type="chain" id="PRO_0000393914" description="Transmembrane emp24 domain-containing protein bai" evidence="3">
    <location>
        <begin position="21"/>
        <end position="206"/>
    </location>
</feature>
<feature type="topological domain" description="Lumenal" evidence="3">
    <location>
        <begin position="21"/>
        <end position="172"/>
    </location>
</feature>
<feature type="transmembrane region" description="Helical" evidence="3">
    <location>
        <begin position="173"/>
        <end position="193"/>
    </location>
</feature>
<feature type="topological domain" description="Cytoplasmic" evidence="3">
    <location>
        <begin position="194"/>
        <end position="206"/>
    </location>
</feature>
<feature type="domain" description="GOLD" evidence="4">
    <location>
        <begin position="30"/>
        <end position="140"/>
    </location>
</feature>
<organism>
    <name type="scientific">Drosophila ananassae</name>
    <name type="common">Fruit fly</name>
    <dbReference type="NCBI Taxonomy" id="7217"/>
    <lineage>
        <taxon>Eukaryota</taxon>
        <taxon>Metazoa</taxon>
        <taxon>Ecdysozoa</taxon>
        <taxon>Arthropoda</taxon>
        <taxon>Hexapoda</taxon>
        <taxon>Insecta</taxon>
        <taxon>Pterygota</taxon>
        <taxon>Neoptera</taxon>
        <taxon>Endopterygota</taxon>
        <taxon>Diptera</taxon>
        <taxon>Brachycera</taxon>
        <taxon>Muscomorpha</taxon>
        <taxon>Ephydroidea</taxon>
        <taxon>Drosophilidae</taxon>
        <taxon>Drosophila</taxon>
        <taxon>Sophophora</taxon>
    </lineage>
</organism>
<comment type="function">
    <text evidence="2">Eca and bai are essential, though not redundant, for dorsoventral patterning of the embryo. Specifically required during early embryogenesis for the activity of maternal tkv, while the zygotic tkv is not affected (By similarity).</text>
</comment>
<comment type="subcellular location">
    <subcellularLocation>
        <location evidence="1">Membrane</location>
        <topology evidence="3">Single-pass type I membrane protein</topology>
    </subcellularLocation>
</comment>
<comment type="similarity">
    <text evidence="3">Belongs to the EMP24/GP25L family.</text>
</comment>
<dbReference type="EMBL" id="CH902617">
    <property type="protein sequence ID" value="EDV43642.1"/>
    <property type="molecule type" value="Genomic_DNA"/>
</dbReference>
<dbReference type="SMR" id="B3LVB0"/>
<dbReference type="FunCoup" id="B3LVB0">
    <property type="interactions" value="2428"/>
</dbReference>
<dbReference type="STRING" id="7217.B3LVB0"/>
<dbReference type="EnsemblMetazoa" id="FBtr0121122">
    <property type="protein sequence ID" value="FBpp0119614"/>
    <property type="gene ID" value="FBgn0093443"/>
</dbReference>
<dbReference type="EnsemblMetazoa" id="XM_001955045.4">
    <property type="protein sequence ID" value="XP_001955081.1"/>
    <property type="gene ID" value="LOC6499218"/>
</dbReference>
<dbReference type="GeneID" id="6499218"/>
<dbReference type="KEGG" id="dan:6499218"/>
<dbReference type="CTD" id="42996"/>
<dbReference type="eggNOG" id="KOG1691">
    <property type="taxonomic scope" value="Eukaryota"/>
</dbReference>
<dbReference type="HOGENOM" id="CLU_066963_3_1_1"/>
<dbReference type="InParanoid" id="B3LVB0"/>
<dbReference type="OMA" id="DVFEACF"/>
<dbReference type="OrthoDB" id="759142at2759"/>
<dbReference type="PhylomeDB" id="B3LVB0"/>
<dbReference type="ChiTaRS" id="bai">
    <property type="organism name" value="fly"/>
</dbReference>
<dbReference type="Proteomes" id="UP000007801">
    <property type="component" value="Unassembled WGS sequence"/>
</dbReference>
<dbReference type="GO" id="GO:0005737">
    <property type="term" value="C:cytoplasm"/>
    <property type="evidence" value="ECO:0007669"/>
    <property type="project" value="GOC"/>
</dbReference>
<dbReference type="GO" id="GO:0016020">
    <property type="term" value="C:membrane"/>
    <property type="evidence" value="ECO:0007669"/>
    <property type="project" value="UniProtKB-SubCell"/>
</dbReference>
<dbReference type="GO" id="GO:0038024">
    <property type="term" value="F:cargo receptor activity"/>
    <property type="evidence" value="ECO:0007669"/>
    <property type="project" value="EnsemblMetazoa"/>
</dbReference>
<dbReference type="GO" id="GO:0009953">
    <property type="term" value="P:dorsal/ventral pattern formation"/>
    <property type="evidence" value="ECO:0000250"/>
    <property type="project" value="UniProtKB"/>
</dbReference>
<dbReference type="GO" id="GO:0006888">
    <property type="term" value="P:endoplasmic reticulum to Golgi vesicle-mediated transport"/>
    <property type="evidence" value="ECO:0007669"/>
    <property type="project" value="EnsemblMetazoa"/>
</dbReference>
<dbReference type="InterPro" id="IPR015720">
    <property type="entry name" value="Emp24-like"/>
</dbReference>
<dbReference type="InterPro" id="IPR009038">
    <property type="entry name" value="GOLD_dom"/>
</dbReference>
<dbReference type="PANTHER" id="PTHR22811">
    <property type="entry name" value="TRANSMEMBRANE EMP24 DOMAIN-CONTAINING PROTEIN"/>
    <property type="match status" value="1"/>
</dbReference>
<dbReference type="Pfam" id="PF01105">
    <property type="entry name" value="EMP24_GP25L"/>
    <property type="match status" value="1"/>
</dbReference>
<dbReference type="SMART" id="SM01190">
    <property type="entry name" value="EMP24_GP25L"/>
    <property type="match status" value="1"/>
</dbReference>
<dbReference type="PROSITE" id="PS50866">
    <property type="entry name" value="GOLD"/>
    <property type="match status" value="1"/>
</dbReference>
<gene>
    <name evidence="2" type="primary">bai</name>
    <name type="ORF">GF16422</name>
</gene>